<reference key="1">
    <citation type="journal article" date="2004" name="Proc. Natl. Acad. Sci. U.S.A.">
        <title>Hematopoietic gene expression profile in zebrafish kidney marrow.</title>
        <authorList>
            <person name="Song H.-D."/>
            <person name="Sun X.-J."/>
            <person name="Deng M."/>
            <person name="Zhang G.-W."/>
            <person name="Zhou Y."/>
            <person name="Wu X.-Y."/>
            <person name="Sheng Y."/>
            <person name="Chen Y."/>
            <person name="Ruan Z."/>
            <person name="Jiang C.-L."/>
            <person name="Fan H.-Y."/>
            <person name="Zon L.I."/>
            <person name="Kanki J.P."/>
            <person name="Liu T.X."/>
            <person name="Look A.T."/>
            <person name="Chen Z."/>
        </authorList>
    </citation>
    <scope>NUCLEOTIDE SEQUENCE [LARGE SCALE MRNA]</scope>
    <source>
        <tissue>Kidney marrow</tissue>
    </source>
</reference>
<reference key="2">
    <citation type="journal article" date="2013" name="Nature">
        <title>The zebrafish reference genome sequence and its relationship to the human genome.</title>
        <authorList>
            <person name="Howe K."/>
            <person name="Clark M.D."/>
            <person name="Torroja C.F."/>
            <person name="Torrance J."/>
            <person name="Berthelot C."/>
            <person name="Muffato M."/>
            <person name="Collins J.E."/>
            <person name="Humphray S."/>
            <person name="McLaren K."/>
            <person name="Matthews L."/>
            <person name="McLaren S."/>
            <person name="Sealy I."/>
            <person name="Caccamo M."/>
            <person name="Churcher C."/>
            <person name="Scott C."/>
            <person name="Barrett J.C."/>
            <person name="Koch R."/>
            <person name="Rauch G.J."/>
            <person name="White S."/>
            <person name="Chow W."/>
            <person name="Kilian B."/>
            <person name="Quintais L.T."/>
            <person name="Guerra-Assuncao J.A."/>
            <person name="Zhou Y."/>
            <person name="Gu Y."/>
            <person name="Yen J."/>
            <person name="Vogel J.H."/>
            <person name="Eyre T."/>
            <person name="Redmond S."/>
            <person name="Banerjee R."/>
            <person name="Chi J."/>
            <person name="Fu B."/>
            <person name="Langley E."/>
            <person name="Maguire S.F."/>
            <person name="Laird G.K."/>
            <person name="Lloyd D."/>
            <person name="Kenyon E."/>
            <person name="Donaldson S."/>
            <person name="Sehra H."/>
            <person name="Almeida-King J."/>
            <person name="Loveland J."/>
            <person name="Trevanion S."/>
            <person name="Jones M."/>
            <person name="Quail M."/>
            <person name="Willey D."/>
            <person name="Hunt A."/>
            <person name="Burton J."/>
            <person name="Sims S."/>
            <person name="McLay K."/>
            <person name="Plumb B."/>
            <person name="Davis J."/>
            <person name="Clee C."/>
            <person name="Oliver K."/>
            <person name="Clark R."/>
            <person name="Riddle C."/>
            <person name="Elliot D."/>
            <person name="Threadgold G."/>
            <person name="Harden G."/>
            <person name="Ware D."/>
            <person name="Begum S."/>
            <person name="Mortimore B."/>
            <person name="Kerry G."/>
            <person name="Heath P."/>
            <person name="Phillimore B."/>
            <person name="Tracey A."/>
            <person name="Corby N."/>
            <person name="Dunn M."/>
            <person name="Johnson C."/>
            <person name="Wood J."/>
            <person name="Clark S."/>
            <person name="Pelan S."/>
            <person name="Griffiths G."/>
            <person name="Smith M."/>
            <person name="Glithero R."/>
            <person name="Howden P."/>
            <person name="Barker N."/>
            <person name="Lloyd C."/>
            <person name="Stevens C."/>
            <person name="Harley J."/>
            <person name="Holt K."/>
            <person name="Panagiotidis G."/>
            <person name="Lovell J."/>
            <person name="Beasley H."/>
            <person name="Henderson C."/>
            <person name="Gordon D."/>
            <person name="Auger K."/>
            <person name="Wright D."/>
            <person name="Collins J."/>
            <person name="Raisen C."/>
            <person name="Dyer L."/>
            <person name="Leung K."/>
            <person name="Robertson L."/>
            <person name="Ambridge K."/>
            <person name="Leongamornlert D."/>
            <person name="McGuire S."/>
            <person name="Gilderthorp R."/>
            <person name="Griffiths C."/>
            <person name="Manthravadi D."/>
            <person name="Nichol S."/>
            <person name="Barker G."/>
            <person name="Whitehead S."/>
            <person name="Kay M."/>
            <person name="Brown J."/>
            <person name="Murnane C."/>
            <person name="Gray E."/>
            <person name="Humphries M."/>
            <person name="Sycamore N."/>
            <person name="Barker D."/>
            <person name="Saunders D."/>
            <person name="Wallis J."/>
            <person name="Babbage A."/>
            <person name="Hammond S."/>
            <person name="Mashreghi-Mohammadi M."/>
            <person name="Barr L."/>
            <person name="Martin S."/>
            <person name="Wray P."/>
            <person name="Ellington A."/>
            <person name="Matthews N."/>
            <person name="Ellwood M."/>
            <person name="Woodmansey R."/>
            <person name="Clark G."/>
            <person name="Cooper J."/>
            <person name="Tromans A."/>
            <person name="Grafham D."/>
            <person name="Skuce C."/>
            <person name="Pandian R."/>
            <person name="Andrews R."/>
            <person name="Harrison E."/>
            <person name="Kimberley A."/>
            <person name="Garnett J."/>
            <person name="Fosker N."/>
            <person name="Hall R."/>
            <person name="Garner P."/>
            <person name="Kelly D."/>
            <person name="Bird C."/>
            <person name="Palmer S."/>
            <person name="Gehring I."/>
            <person name="Berger A."/>
            <person name="Dooley C.M."/>
            <person name="Ersan-Urun Z."/>
            <person name="Eser C."/>
            <person name="Geiger H."/>
            <person name="Geisler M."/>
            <person name="Karotki L."/>
            <person name="Kirn A."/>
            <person name="Konantz J."/>
            <person name="Konantz M."/>
            <person name="Oberlander M."/>
            <person name="Rudolph-Geiger S."/>
            <person name="Teucke M."/>
            <person name="Lanz C."/>
            <person name="Raddatz G."/>
            <person name="Osoegawa K."/>
            <person name="Zhu B."/>
            <person name="Rapp A."/>
            <person name="Widaa S."/>
            <person name="Langford C."/>
            <person name="Yang F."/>
            <person name="Schuster S.C."/>
            <person name="Carter N.P."/>
            <person name="Harrow J."/>
            <person name="Ning Z."/>
            <person name="Herrero J."/>
            <person name="Searle S.M."/>
            <person name="Enright A."/>
            <person name="Geisler R."/>
            <person name="Plasterk R.H."/>
            <person name="Lee C."/>
            <person name="Westerfield M."/>
            <person name="de Jong P.J."/>
            <person name="Zon L.I."/>
            <person name="Postlethwait J.H."/>
            <person name="Nusslein-Volhard C."/>
            <person name="Hubbard T.J."/>
            <person name="Roest Crollius H."/>
            <person name="Rogers J."/>
            <person name="Stemple D.L."/>
        </authorList>
    </citation>
    <scope>NUCLEOTIDE SEQUENCE [LARGE SCALE GENOMIC DNA]</scope>
    <source>
        <strain>Tuebingen</strain>
    </source>
</reference>
<reference key="3">
    <citation type="submission" date="2003-01" db="EMBL/GenBank/DDBJ databases">
        <authorList>
            <consortium name="NIH - Zebrafish Gene Collection (ZGC) project"/>
        </authorList>
    </citation>
    <scope>NUCLEOTIDE SEQUENCE [LARGE SCALE MRNA]</scope>
    <source>
        <strain>AB</strain>
    </source>
</reference>
<organism>
    <name type="scientific">Danio rerio</name>
    <name type="common">Zebrafish</name>
    <name type="synonym">Brachydanio rerio</name>
    <dbReference type="NCBI Taxonomy" id="7955"/>
    <lineage>
        <taxon>Eukaryota</taxon>
        <taxon>Metazoa</taxon>
        <taxon>Chordata</taxon>
        <taxon>Craniata</taxon>
        <taxon>Vertebrata</taxon>
        <taxon>Euteleostomi</taxon>
        <taxon>Actinopterygii</taxon>
        <taxon>Neopterygii</taxon>
        <taxon>Teleostei</taxon>
        <taxon>Ostariophysi</taxon>
        <taxon>Cypriniformes</taxon>
        <taxon>Danionidae</taxon>
        <taxon>Danioninae</taxon>
        <taxon>Danio</taxon>
    </lineage>
</organism>
<dbReference type="EMBL" id="AY423037">
    <property type="protein sequence ID" value="AAQ98013.1"/>
    <property type="molecule type" value="mRNA"/>
</dbReference>
<dbReference type="EMBL" id="AL929190">
    <property type="protein sequence ID" value="CAP09598.1"/>
    <property type="molecule type" value="Genomic_DNA"/>
</dbReference>
<dbReference type="EMBL" id="BC044443">
    <property type="protein sequence ID" value="AAH44443.1"/>
    <property type="molecule type" value="mRNA"/>
</dbReference>
<dbReference type="RefSeq" id="NP_956354.1">
    <property type="nucleotide sequence ID" value="NM_200060.3"/>
</dbReference>
<dbReference type="FunCoup" id="Q6TEL3">
    <property type="interactions" value="196"/>
</dbReference>
<dbReference type="STRING" id="7955.ENSDARP00000034273"/>
<dbReference type="PaxDb" id="7955-ENSDARP00000109079"/>
<dbReference type="Ensembl" id="ENSDART00000031895">
    <property type="protein sequence ID" value="ENSDARP00000034273"/>
    <property type="gene ID" value="ENSDARG00000023724"/>
</dbReference>
<dbReference type="GeneID" id="791998"/>
<dbReference type="KEGG" id="dre:791998"/>
<dbReference type="AGR" id="ZFIN:ZDB-GENE-030131-9260"/>
<dbReference type="CTD" id="56882"/>
<dbReference type="ZFIN" id="ZDB-GENE-030131-9260">
    <property type="gene designation" value="cdc42se1"/>
</dbReference>
<dbReference type="eggNOG" id="ENOG502S499">
    <property type="taxonomic scope" value="Eukaryota"/>
</dbReference>
<dbReference type="HOGENOM" id="CLU_173417_1_0_1"/>
<dbReference type="InParanoid" id="Q6TEL3"/>
<dbReference type="OMA" id="QSIGMSD"/>
<dbReference type="OrthoDB" id="5559822at2759"/>
<dbReference type="PhylomeDB" id="Q6TEL3"/>
<dbReference type="TreeFam" id="TF323815"/>
<dbReference type="PRO" id="PR:Q6TEL3"/>
<dbReference type="Proteomes" id="UP000000437">
    <property type="component" value="Alternate scaffold 16"/>
</dbReference>
<dbReference type="Proteomes" id="UP000000437">
    <property type="component" value="Chromosome 16"/>
</dbReference>
<dbReference type="Bgee" id="ENSDARG00000023724">
    <property type="expression patterns" value="Expressed in swim bladder and 26 other cell types or tissues"/>
</dbReference>
<dbReference type="GO" id="GO:0005737">
    <property type="term" value="C:cytoplasm"/>
    <property type="evidence" value="ECO:0007669"/>
    <property type="project" value="UniProtKB-KW"/>
</dbReference>
<dbReference type="GO" id="GO:0005856">
    <property type="term" value="C:cytoskeleton"/>
    <property type="evidence" value="ECO:0007669"/>
    <property type="project" value="UniProtKB-SubCell"/>
</dbReference>
<dbReference type="GO" id="GO:0005886">
    <property type="term" value="C:plasma membrane"/>
    <property type="evidence" value="ECO:0000318"/>
    <property type="project" value="GO_Central"/>
</dbReference>
<dbReference type="GO" id="GO:0031267">
    <property type="term" value="F:small GTPase binding"/>
    <property type="evidence" value="ECO:0007669"/>
    <property type="project" value="InterPro"/>
</dbReference>
<dbReference type="GO" id="GO:0021555">
    <property type="term" value="P:midbrain-hindbrain boundary morphogenesis"/>
    <property type="evidence" value="ECO:0000316"/>
    <property type="project" value="ZFIN"/>
</dbReference>
<dbReference type="GO" id="GO:0008360">
    <property type="term" value="P:regulation of cell shape"/>
    <property type="evidence" value="ECO:0007669"/>
    <property type="project" value="UniProtKB-KW"/>
</dbReference>
<dbReference type="GO" id="GO:0035023">
    <property type="term" value="P:regulation of Rho protein signal transduction"/>
    <property type="evidence" value="ECO:0007669"/>
    <property type="project" value="InterPro"/>
</dbReference>
<dbReference type="FunFam" id="3.90.810.10:FF:000015">
    <property type="entry name" value="CDC42 small effector protein 1"/>
    <property type="match status" value="1"/>
</dbReference>
<dbReference type="Gene3D" id="3.90.810.10">
    <property type="entry name" value="CRIB domain"/>
    <property type="match status" value="1"/>
</dbReference>
<dbReference type="InterPro" id="IPR000095">
    <property type="entry name" value="CRIB_dom"/>
</dbReference>
<dbReference type="InterPro" id="IPR036936">
    <property type="entry name" value="CRIB_dom_sf"/>
</dbReference>
<dbReference type="InterPro" id="IPR039056">
    <property type="entry name" value="SPEC"/>
</dbReference>
<dbReference type="PANTHER" id="PTHR13502:SF3">
    <property type="entry name" value="CDC42 SMALL EFFECTOR PROTEIN 1"/>
    <property type="match status" value="1"/>
</dbReference>
<dbReference type="PANTHER" id="PTHR13502">
    <property type="entry name" value="CDC42 SMALL EFFECTOR PROTEIN HOMOLOG"/>
    <property type="match status" value="1"/>
</dbReference>
<dbReference type="Pfam" id="PF00786">
    <property type="entry name" value="PBD"/>
    <property type="match status" value="1"/>
</dbReference>
<dbReference type="PROSITE" id="PS50108">
    <property type="entry name" value="CRIB"/>
    <property type="match status" value="1"/>
</dbReference>
<feature type="chain" id="PRO_0000334634" description="CDC42 small effector protein 1">
    <location>
        <begin position="1"/>
        <end position="75"/>
    </location>
</feature>
<feature type="domain" description="CRIB" evidence="2">
    <location>
        <begin position="30"/>
        <end position="43"/>
    </location>
</feature>
<feature type="region of interest" description="Disordered" evidence="3">
    <location>
        <begin position="45"/>
        <end position="75"/>
    </location>
</feature>
<feature type="lipid moiety-binding region" description="S-palmitoyl cysteine" evidence="1">
    <location>
        <position position="10"/>
    </location>
</feature>
<feature type="lipid moiety-binding region" description="S-palmitoyl cysteine" evidence="1">
    <location>
        <position position="11"/>
    </location>
</feature>
<keyword id="KW-1003">Cell membrane</keyword>
<keyword id="KW-0133">Cell shape</keyword>
<keyword id="KW-0963">Cytoplasm</keyword>
<keyword id="KW-0206">Cytoskeleton</keyword>
<keyword id="KW-0449">Lipoprotein</keyword>
<keyword id="KW-0472">Membrane</keyword>
<keyword id="KW-0564">Palmitate</keyword>
<keyword id="KW-1185">Reference proteome</keyword>
<evidence type="ECO:0000250" key="1"/>
<evidence type="ECO:0000255" key="2">
    <source>
        <dbReference type="PROSITE-ProRule" id="PRU00057"/>
    </source>
</evidence>
<evidence type="ECO:0000256" key="3">
    <source>
        <dbReference type="SAM" id="MobiDB-lite"/>
    </source>
</evidence>
<evidence type="ECO:0000305" key="4"/>
<proteinExistence type="inferred from homology"/>
<sequence length="75" mass="8350">MSAFWHKIGCCVVAKPPPKKKRRRIDRSMIGEPTNFVHLTHIGSGEMADGMQPSGPIKEQMRSKVPHANGRNSLL</sequence>
<accession>Q6TEL3</accession>
<comment type="function">
    <text evidence="1">Probably involved in the organization of the actin cytoskeleton by acting downstream of CDC42, inducing actin filament assembly.</text>
</comment>
<comment type="subcellular location">
    <subcellularLocation>
        <location evidence="1">Cytoplasm</location>
        <location evidence="1">Cytoskeleton</location>
    </subcellularLocation>
    <subcellularLocation>
        <location evidence="1">Cell membrane</location>
        <topology evidence="1">Lipid-anchor</topology>
    </subcellularLocation>
</comment>
<comment type="similarity">
    <text evidence="4">Belongs to the CDC42SE/SPEC family.</text>
</comment>
<protein>
    <recommendedName>
        <fullName>CDC42 small effector protein 1</fullName>
    </recommendedName>
</protein>
<name>C42S1_DANRE</name>
<gene>
    <name type="primary">cdc42se1</name>
    <name type="ORF">si:dkey-77n11.2</name>
    <name type="ORF">zgc:55642</name>
</gene>